<comment type="function">
    <text evidence="1">Excises uracil residues from the DNA which can arise as a result of misincorporation of dUMP residues by DNA polymerase or due to deamination of cytosine.</text>
</comment>
<comment type="catalytic activity">
    <reaction evidence="1">
        <text>Hydrolyzes single-stranded DNA or mismatched double-stranded DNA and polynucleotides, releasing free uracil.</text>
        <dbReference type="EC" id="3.2.2.27"/>
    </reaction>
</comment>
<comment type="subcellular location">
    <subcellularLocation>
        <location evidence="1">Cytoplasm</location>
    </subcellularLocation>
</comment>
<comment type="similarity">
    <text evidence="1">Belongs to the uracil-DNA glycosylase (UDG) superfamily. UNG family.</text>
</comment>
<gene>
    <name evidence="1" type="primary">ung</name>
    <name type="ordered locus">M6_Spy0725</name>
</gene>
<accession>Q5XCK3</accession>
<evidence type="ECO:0000255" key="1">
    <source>
        <dbReference type="HAMAP-Rule" id="MF_00148"/>
    </source>
</evidence>
<sequence>MAHSIWHEKIKSFLPEHYYGRINHFLDEAYASGLVYPQRENVFKALQVTPLEETKVLILGQDPYHGPKQAQGISFSVPEEISAPPSLINILKELADDIGPRDHHDLSTWASQGVLLLNACLTVPAGQANGHAGLIWEPFTDAVIKVLNEKDSPVVFILWGAYARKKKAFITNPKHHIIESPHPSPLSSYRGFFGSKPFSRTNAMLEKEGMIGIDWLQ</sequence>
<proteinExistence type="inferred from homology"/>
<reference key="1">
    <citation type="journal article" date="2004" name="J. Infect. Dis.">
        <title>Progress toward characterization of the group A Streptococcus metagenome: complete genome sequence of a macrolide-resistant serotype M6 strain.</title>
        <authorList>
            <person name="Banks D.J."/>
            <person name="Porcella S.F."/>
            <person name="Barbian K.D."/>
            <person name="Beres S.B."/>
            <person name="Philips L.E."/>
            <person name="Voyich J.M."/>
            <person name="DeLeo F.R."/>
            <person name="Martin J.M."/>
            <person name="Somerville G.A."/>
            <person name="Musser J.M."/>
        </authorList>
    </citation>
    <scope>NUCLEOTIDE SEQUENCE [LARGE SCALE GENOMIC DNA]</scope>
    <source>
        <strain>ATCC BAA-946 / MGAS10394</strain>
    </source>
</reference>
<protein>
    <recommendedName>
        <fullName evidence="1">Uracil-DNA glycosylase</fullName>
        <shortName evidence="1">UDG</shortName>
        <ecNumber evidence="1">3.2.2.27</ecNumber>
    </recommendedName>
</protein>
<organism>
    <name type="scientific">Streptococcus pyogenes serotype M6 (strain ATCC BAA-946 / MGAS10394)</name>
    <dbReference type="NCBI Taxonomy" id="286636"/>
    <lineage>
        <taxon>Bacteria</taxon>
        <taxon>Bacillati</taxon>
        <taxon>Bacillota</taxon>
        <taxon>Bacilli</taxon>
        <taxon>Lactobacillales</taxon>
        <taxon>Streptococcaceae</taxon>
        <taxon>Streptococcus</taxon>
    </lineage>
</organism>
<feature type="chain" id="PRO_0000176156" description="Uracil-DNA glycosylase">
    <location>
        <begin position="1"/>
        <end position="217"/>
    </location>
</feature>
<feature type="active site" description="Proton acceptor" evidence="1">
    <location>
        <position position="62"/>
    </location>
</feature>
<keyword id="KW-0963">Cytoplasm</keyword>
<keyword id="KW-0227">DNA damage</keyword>
<keyword id="KW-0234">DNA repair</keyword>
<keyword id="KW-0378">Hydrolase</keyword>
<name>UNG_STRP6</name>
<dbReference type="EC" id="3.2.2.27" evidence="1"/>
<dbReference type="EMBL" id="CP000003">
    <property type="protein sequence ID" value="AAT86860.1"/>
    <property type="molecule type" value="Genomic_DNA"/>
</dbReference>
<dbReference type="RefSeq" id="WP_011184425.1">
    <property type="nucleotide sequence ID" value="NC_006086.1"/>
</dbReference>
<dbReference type="SMR" id="Q5XCK3"/>
<dbReference type="KEGG" id="spa:M6_Spy0725"/>
<dbReference type="HOGENOM" id="CLU_032162_3_1_9"/>
<dbReference type="Proteomes" id="UP000001167">
    <property type="component" value="Chromosome"/>
</dbReference>
<dbReference type="GO" id="GO:0005737">
    <property type="term" value="C:cytoplasm"/>
    <property type="evidence" value="ECO:0007669"/>
    <property type="project" value="UniProtKB-SubCell"/>
</dbReference>
<dbReference type="GO" id="GO:0004844">
    <property type="term" value="F:uracil DNA N-glycosylase activity"/>
    <property type="evidence" value="ECO:0007669"/>
    <property type="project" value="UniProtKB-UniRule"/>
</dbReference>
<dbReference type="GO" id="GO:0097510">
    <property type="term" value="P:base-excision repair, AP site formation via deaminated base removal"/>
    <property type="evidence" value="ECO:0007669"/>
    <property type="project" value="TreeGrafter"/>
</dbReference>
<dbReference type="CDD" id="cd10027">
    <property type="entry name" value="UDG-F1-like"/>
    <property type="match status" value="1"/>
</dbReference>
<dbReference type="FunFam" id="3.40.470.10:FF:000008">
    <property type="entry name" value="Uracil-DNA glycosylase"/>
    <property type="match status" value="1"/>
</dbReference>
<dbReference type="Gene3D" id="3.40.470.10">
    <property type="entry name" value="Uracil-DNA glycosylase-like domain"/>
    <property type="match status" value="1"/>
</dbReference>
<dbReference type="HAMAP" id="MF_00148">
    <property type="entry name" value="UDG"/>
    <property type="match status" value="1"/>
</dbReference>
<dbReference type="InterPro" id="IPR002043">
    <property type="entry name" value="UDG_fam1"/>
</dbReference>
<dbReference type="InterPro" id="IPR018085">
    <property type="entry name" value="Ura-DNA_Glyclase_AS"/>
</dbReference>
<dbReference type="InterPro" id="IPR005122">
    <property type="entry name" value="Uracil-DNA_glycosylase-like"/>
</dbReference>
<dbReference type="InterPro" id="IPR036895">
    <property type="entry name" value="Uracil-DNA_glycosylase-like_sf"/>
</dbReference>
<dbReference type="NCBIfam" id="NF003588">
    <property type="entry name" value="PRK05254.1-1"/>
    <property type="match status" value="1"/>
</dbReference>
<dbReference type="NCBIfam" id="NF003589">
    <property type="entry name" value="PRK05254.1-2"/>
    <property type="match status" value="1"/>
</dbReference>
<dbReference type="NCBIfam" id="NF003592">
    <property type="entry name" value="PRK05254.1-5"/>
    <property type="match status" value="1"/>
</dbReference>
<dbReference type="NCBIfam" id="TIGR00628">
    <property type="entry name" value="ung"/>
    <property type="match status" value="1"/>
</dbReference>
<dbReference type="PANTHER" id="PTHR11264">
    <property type="entry name" value="URACIL-DNA GLYCOSYLASE"/>
    <property type="match status" value="1"/>
</dbReference>
<dbReference type="PANTHER" id="PTHR11264:SF0">
    <property type="entry name" value="URACIL-DNA GLYCOSYLASE"/>
    <property type="match status" value="1"/>
</dbReference>
<dbReference type="Pfam" id="PF03167">
    <property type="entry name" value="UDG"/>
    <property type="match status" value="1"/>
</dbReference>
<dbReference type="SMART" id="SM00986">
    <property type="entry name" value="UDG"/>
    <property type="match status" value="1"/>
</dbReference>
<dbReference type="SMART" id="SM00987">
    <property type="entry name" value="UreE_C"/>
    <property type="match status" value="1"/>
</dbReference>
<dbReference type="SUPFAM" id="SSF52141">
    <property type="entry name" value="Uracil-DNA glycosylase-like"/>
    <property type="match status" value="1"/>
</dbReference>
<dbReference type="PROSITE" id="PS00130">
    <property type="entry name" value="U_DNA_GLYCOSYLASE"/>
    <property type="match status" value="1"/>
</dbReference>